<gene>
    <name type="primary">ssb</name>
    <name type="ordered locus">CBU_0271</name>
</gene>
<organism>
    <name type="scientific">Coxiella burnetii (strain RSA 493 / Nine Mile phase I)</name>
    <dbReference type="NCBI Taxonomy" id="227377"/>
    <lineage>
        <taxon>Bacteria</taxon>
        <taxon>Pseudomonadati</taxon>
        <taxon>Pseudomonadota</taxon>
        <taxon>Gammaproteobacteria</taxon>
        <taxon>Legionellales</taxon>
        <taxon>Coxiellaceae</taxon>
        <taxon>Coxiella</taxon>
    </lineage>
</organism>
<dbReference type="EMBL" id="AE016828">
    <property type="protein sequence ID" value="AAO89829.1"/>
    <property type="molecule type" value="Genomic_DNA"/>
</dbReference>
<dbReference type="RefSeq" id="NP_819315.1">
    <property type="nucleotide sequence ID" value="NC_002971.4"/>
</dbReference>
<dbReference type="RefSeq" id="WP_005771486.1">
    <property type="nucleotide sequence ID" value="NC_002971.4"/>
</dbReference>
<dbReference type="PDB" id="3TQY">
    <property type="method" value="X-ray"/>
    <property type="resolution" value="2.60 A"/>
    <property type="chains" value="A/B/C/D=1-155"/>
</dbReference>
<dbReference type="PDBsum" id="3TQY"/>
<dbReference type="SMR" id="Q83EP4"/>
<dbReference type="STRING" id="227377.CBU_0271"/>
<dbReference type="DNASU" id="1208152"/>
<dbReference type="EnsemblBacteria" id="AAO89829">
    <property type="protein sequence ID" value="AAO89829"/>
    <property type="gene ID" value="CBU_0271"/>
</dbReference>
<dbReference type="GeneID" id="1208152"/>
<dbReference type="KEGG" id="cbu:CBU_0271"/>
<dbReference type="PATRIC" id="fig|227377.7.peg.265"/>
<dbReference type="eggNOG" id="COG0629">
    <property type="taxonomic scope" value="Bacteria"/>
</dbReference>
<dbReference type="HOGENOM" id="CLU_078758_0_2_6"/>
<dbReference type="OrthoDB" id="9809878at2"/>
<dbReference type="EvolutionaryTrace" id="Q83EP4"/>
<dbReference type="Proteomes" id="UP000002671">
    <property type="component" value="Chromosome"/>
</dbReference>
<dbReference type="GO" id="GO:0009295">
    <property type="term" value="C:nucleoid"/>
    <property type="evidence" value="ECO:0000318"/>
    <property type="project" value="GO_Central"/>
</dbReference>
<dbReference type="GO" id="GO:0008047">
    <property type="term" value="F:enzyme activator activity"/>
    <property type="evidence" value="ECO:0000318"/>
    <property type="project" value="GO_Central"/>
</dbReference>
<dbReference type="GO" id="GO:0003697">
    <property type="term" value="F:single-stranded DNA binding"/>
    <property type="evidence" value="ECO:0000318"/>
    <property type="project" value="GO_Central"/>
</dbReference>
<dbReference type="GO" id="GO:0006310">
    <property type="term" value="P:DNA recombination"/>
    <property type="evidence" value="ECO:0007669"/>
    <property type="project" value="UniProtKB-UniRule"/>
</dbReference>
<dbReference type="GO" id="GO:0006281">
    <property type="term" value="P:DNA repair"/>
    <property type="evidence" value="ECO:0007669"/>
    <property type="project" value="UniProtKB-UniRule"/>
</dbReference>
<dbReference type="GO" id="GO:0006260">
    <property type="term" value="P:DNA replication"/>
    <property type="evidence" value="ECO:0000318"/>
    <property type="project" value="GO_Central"/>
</dbReference>
<dbReference type="CDD" id="cd04496">
    <property type="entry name" value="SSB_OBF"/>
    <property type="match status" value="1"/>
</dbReference>
<dbReference type="Gene3D" id="2.40.50.140">
    <property type="entry name" value="Nucleic acid-binding proteins"/>
    <property type="match status" value="1"/>
</dbReference>
<dbReference type="HAMAP" id="MF_00984">
    <property type="entry name" value="SSB"/>
    <property type="match status" value="1"/>
</dbReference>
<dbReference type="InterPro" id="IPR012340">
    <property type="entry name" value="NA-bd_OB-fold"/>
</dbReference>
<dbReference type="InterPro" id="IPR000424">
    <property type="entry name" value="Primosome_PriB/ssb"/>
</dbReference>
<dbReference type="InterPro" id="IPR011344">
    <property type="entry name" value="ssDNA-bd"/>
</dbReference>
<dbReference type="NCBIfam" id="TIGR00621">
    <property type="entry name" value="ssb"/>
    <property type="match status" value="1"/>
</dbReference>
<dbReference type="PANTHER" id="PTHR10302">
    <property type="entry name" value="SINGLE-STRANDED DNA-BINDING PROTEIN"/>
    <property type="match status" value="1"/>
</dbReference>
<dbReference type="PANTHER" id="PTHR10302:SF27">
    <property type="entry name" value="SINGLE-STRANDED DNA-BINDING PROTEIN"/>
    <property type="match status" value="1"/>
</dbReference>
<dbReference type="Pfam" id="PF00436">
    <property type="entry name" value="SSB"/>
    <property type="match status" value="1"/>
</dbReference>
<dbReference type="PIRSF" id="PIRSF002070">
    <property type="entry name" value="SSB"/>
    <property type="match status" value="1"/>
</dbReference>
<dbReference type="SUPFAM" id="SSF50249">
    <property type="entry name" value="Nucleic acid-binding proteins"/>
    <property type="match status" value="1"/>
</dbReference>
<dbReference type="PROSITE" id="PS50935">
    <property type="entry name" value="SSB"/>
    <property type="match status" value="1"/>
</dbReference>
<comment type="function">
    <text evidence="1">Plays an important role in DNA replication, recombination and repair. Binds to ssDNA and to an array of partner proteins to recruit them to their sites of action during DNA metabolism.</text>
</comment>
<comment type="subunit">
    <text evidence="1">Homotetramer.</text>
</comment>
<evidence type="ECO:0000255" key="1">
    <source>
        <dbReference type="HAMAP-Rule" id="MF_00984"/>
    </source>
</evidence>
<evidence type="ECO:0000256" key="2">
    <source>
        <dbReference type="SAM" id="MobiDB-lite"/>
    </source>
</evidence>
<evidence type="ECO:0007829" key="3">
    <source>
        <dbReference type="PDB" id="3TQY"/>
    </source>
</evidence>
<proteinExistence type="evidence at protein level"/>
<reference key="1">
    <citation type="journal article" date="2003" name="Proc. Natl. Acad. Sci. U.S.A.">
        <title>Complete genome sequence of the Q-fever pathogen, Coxiella burnetii.</title>
        <authorList>
            <person name="Seshadri R."/>
            <person name="Paulsen I.T."/>
            <person name="Eisen J.A."/>
            <person name="Read T.D."/>
            <person name="Nelson K.E."/>
            <person name="Nelson W.C."/>
            <person name="Ward N.L."/>
            <person name="Tettelin H."/>
            <person name="Davidsen T.M."/>
            <person name="Beanan M.J."/>
            <person name="DeBoy R.T."/>
            <person name="Daugherty S.C."/>
            <person name="Brinkac L.M."/>
            <person name="Madupu R."/>
            <person name="Dodson R.J."/>
            <person name="Khouri H.M."/>
            <person name="Lee K.H."/>
            <person name="Carty H.A."/>
            <person name="Scanlan D."/>
            <person name="Heinzen R.A."/>
            <person name="Thompson H.A."/>
            <person name="Samuel J.E."/>
            <person name="Fraser C.M."/>
            <person name="Heidelberg J.F."/>
        </authorList>
    </citation>
    <scope>NUCLEOTIDE SEQUENCE [LARGE SCALE GENOMIC DNA]</scope>
    <source>
        <strain>RSA 493 / Nine Mile phase I</strain>
    </source>
</reference>
<name>SSB_COXBU</name>
<feature type="chain" id="PRO_0000096035" description="Single-stranded DNA-binding protein">
    <location>
        <begin position="1"/>
        <end position="158"/>
    </location>
</feature>
<feature type="domain" description="SSB" evidence="1">
    <location>
        <begin position="5"/>
        <end position="110"/>
    </location>
</feature>
<feature type="region of interest" description="Disordered" evidence="2">
    <location>
        <begin position="109"/>
        <end position="158"/>
    </location>
</feature>
<feature type="short sequence motif" description="Important for interaction with partner proteins" evidence="1">
    <location>
        <begin position="153"/>
        <end position="158"/>
    </location>
</feature>
<feature type="compositionally biased region" description="Polar residues" evidence="2">
    <location>
        <begin position="129"/>
        <end position="142"/>
    </location>
</feature>
<feature type="strand" evidence="3">
    <location>
        <begin position="5"/>
        <end position="17"/>
    </location>
</feature>
<feature type="strand" evidence="3">
    <location>
        <begin position="19"/>
        <end position="22"/>
    </location>
</feature>
<feature type="strand" evidence="3">
    <location>
        <begin position="28"/>
        <end position="41"/>
    </location>
</feature>
<feature type="turn" evidence="3">
    <location>
        <begin position="43"/>
        <end position="45"/>
    </location>
</feature>
<feature type="strand" evidence="3">
    <location>
        <begin position="48"/>
        <end position="60"/>
    </location>
</feature>
<feature type="helix" evidence="3">
    <location>
        <begin position="62"/>
        <end position="70"/>
    </location>
</feature>
<feature type="strand" evidence="3">
    <location>
        <begin position="76"/>
        <end position="89"/>
    </location>
</feature>
<feature type="strand" evidence="3">
    <location>
        <begin position="91"/>
        <end position="93"/>
    </location>
</feature>
<feature type="strand" evidence="3">
    <location>
        <begin position="95"/>
        <end position="108"/>
    </location>
</feature>
<accession>Q83EP4</accession>
<sequence>MARGVNKVILIGNLGQDPEVRYTPNGNAVANVTLATSTTWRDKQTGELQERTEWHRIAFFNRLAEIVGEYLRKGSKIYIEGSLRTRKWQDKNGVDRYTTEIIANEMHMLDNRGGGNSGNYGNHSEGGASNKQSAPTSSQTPTAGDDSSVADFDDDIPF</sequence>
<keyword id="KW-0002">3D-structure</keyword>
<keyword id="KW-0227">DNA damage</keyword>
<keyword id="KW-0233">DNA recombination</keyword>
<keyword id="KW-0234">DNA repair</keyword>
<keyword id="KW-0235">DNA replication</keyword>
<keyword id="KW-0238">DNA-binding</keyword>
<keyword id="KW-1185">Reference proteome</keyword>
<protein>
    <recommendedName>
        <fullName evidence="1">Single-stranded DNA-binding protein</fullName>
        <shortName evidence="1">SSB</shortName>
    </recommendedName>
</protein>